<reference key="1">
    <citation type="journal article" date="2005" name="PLoS Biol.">
        <title>The genome sequence of Rickettsia felis identifies the first putative conjugative plasmid in an obligate intracellular parasite.</title>
        <authorList>
            <person name="Ogata H."/>
            <person name="Renesto P."/>
            <person name="Audic S."/>
            <person name="Robert C."/>
            <person name="Blanc G."/>
            <person name="Fournier P.-E."/>
            <person name="Parinello H."/>
            <person name="Claverie J.-M."/>
            <person name="Raoult D."/>
        </authorList>
    </citation>
    <scope>NUCLEOTIDE SEQUENCE [LARGE SCALE GENOMIC DNA]</scope>
    <source>
        <strain>ATCC VR-1525 / URRWXCal2</strain>
    </source>
</reference>
<name>RSMA_RICFE</name>
<proteinExistence type="inferred from homology"/>
<keyword id="KW-0963">Cytoplasm</keyword>
<keyword id="KW-0489">Methyltransferase</keyword>
<keyword id="KW-0694">RNA-binding</keyword>
<keyword id="KW-0698">rRNA processing</keyword>
<keyword id="KW-0949">S-adenosyl-L-methionine</keyword>
<keyword id="KW-0808">Transferase</keyword>
<sequence length="239" mass="26723">MLPSIAKHAASHQINPLKKHGQNFIFDSSLCDKIVRASNLAENSRVLEIGPGTGGLTRSILQKNPASLTVIETDERCIPLLNEIKEYYPNLNIIKQDALKINLTDLGYDKVTIISNLPYHIGTELVIRWLKEARLITNMTLMLQKEVVERICAMPSTKAYGRLSVICQLITKVEKCFDVAPTAFYPPPKVYSAIVKLIPLENPPSIALINKVEQITKLAFAGRRKMIKSSLKNLVPNIH</sequence>
<dbReference type="EC" id="2.1.1.182" evidence="1"/>
<dbReference type="EMBL" id="CP000053">
    <property type="protein sequence ID" value="AAY61107.1"/>
    <property type="status" value="ALT_INIT"/>
    <property type="molecule type" value="Genomic_DNA"/>
</dbReference>
<dbReference type="SMR" id="Q4UMV1"/>
<dbReference type="STRING" id="315456.RF_0256"/>
<dbReference type="KEGG" id="rfe:RF_0256"/>
<dbReference type="eggNOG" id="COG0030">
    <property type="taxonomic scope" value="Bacteria"/>
</dbReference>
<dbReference type="HOGENOM" id="CLU_041220_0_1_5"/>
<dbReference type="Proteomes" id="UP000008548">
    <property type="component" value="Chromosome"/>
</dbReference>
<dbReference type="GO" id="GO:0005737">
    <property type="term" value="C:cytoplasm"/>
    <property type="evidence" value="ECO:0007669"/>
    <property type="project" value="UniProtKB-SubCell"/>
</dbReference>
<dbReference type="GO" id="GO:0052908">
    <property type="term" value="F:16S rRNA (adenine(1518)-N(6)/adenine(1519)-N(6))-dimethyltransferase activity"/>
    <property type="evidence" value="ECO:0007669"/>
    <property type="project" value="UniProtKB-EC"/>
</dbReference>
<dbReference type="GO" id="GO:0003723">
    <property type="term" value="F:RNA binding"/>
    <property type="evidence" value="ECO:0007669"/>
    <property type="project" value="UniProtKB-KW"/>
</dbReference>
<dbReference type="CDD" id="cd02440">
    <property type="entry name" value="AdoMet_MTases"/>
    <property type="match status" value="1"/>
</dbReference>
<dbReference type="FunFam" id="3.40.50.150:FF:000770">
    <property type="entry name" value="Ribosomal RNA small subunit methyltransferase A"/>
    <property type="match status" value="1"/>
</dbReference>
<dbReference type="Gene3D" id="1.10.8.100">
    <property type="entry name" value="Ribosomal RNA adenine dimethylase-like, domain 2"/>
    <property type="match status" value="1"/>
</dbReference>
<dbReference type="Gene3D" id="3.40.50.150">
    <property type="entry name" value="Vaccinia Virus protein VP39"/>
    <property type="match status" value="1"/>
</dbReference>
<dbReference type="HAMAP" id="MF_00607">
    <property type="entry name" value="16SrRNA_methyltr_A"/>
    <property type="match status" value="1"/>
</dbReference>
<dbReference type="InterPro" id="IPR001737">
    <property type="entry name" value="KsgA/Erm"/>
</dbReference>
<dbReference type="InterPro" id="IPR023165">
    <property type="entry name" value="rRNA_Ade_diMease-like_C"/>
</dbReference>
<dbReference type="InterPro" id="IPR020596">
    <property type="entry name" value="rRNA_Ade_Mease_Trfase_CS"/>
</dbReference>
<dbReference type="InterPro" id="IPR020598">
    <property type="entry name" value="rRNA_Ade_methylase_Trfase_N"/>
</dbReference>
<dbReference type="InterPro" id="IPR011530">
    <property type="entry name" value="rRNA_adenine_dimethylase"/>
</dbReference>
<dbReference type="InterPro" id="IPR029063">
    <property type="entry name" value="SAM-dependent_MTases_sf"/>
</dbReference>
<dbReference type="NCBIfam" id="TIGR00755">
    <property type="entry name" value="ksgA"/>
    <property type="match status" value="1"/>
</dbReference>
<dbReference type="PANTHER" id="PTHR11727">
    <property type="entry name" value="DIMETHYLADENOSINE TRANSFERASE"/>
    <property type="match status" value="1"/>
</dbReference>
<dbReference type="PANTHER" id="PTHR11727:SF7">
    <property type="entry name" value="DIMETHYLADENOSINE TRANSFERASE-RELATED"/>
    <property type="match status" value="1"/>
</dbReference>
<dbReference type="Pfam" id="PF00398">
    <property type="entry name" value="RrnaAD"/>
    <property type="match status" value="1"/>
</dbReference>
<dbReference type="SMART" id="SM00650">
    <property type="entry name" value="rADc"/>
    <property type="match status" value="1"/>
</dbReference>
<dbReference type="SUPFAM" id="SSF53335">
    <property type="entry name" value="S-adenosyl-L-methionine-dependent methyltransferases"/>
    <property type="match status" value="1"/>
</dbReference>
<dbReference type="PROSITE" id="PS01131">
    <property type="entry name" value="RRNA_A_DIMETH"/>
    <property type="match status" value="1"/>
</dbReference>
<dbReference type="PROSITE" id="PS51689">
    <property type="entry name" value="SAM_RNA_A_N6_MT"/>
    <property type="match status" value="1"/>
</dbReference>
<organism>
    <name type="scientific">Rickettsia felis (strain ATCC VR-1525 / URRWXCal2)</name>
    <name type="common">Rickettsia azadi</name>
    <dbReference type="NCBI Taxonomy" id="315456"/>
    <lineage>
        <taxon>Bacteria</taxon>
        <taxon>Pseudomonadati</taxon>
        <taxon>Pseudomonadota</taxon>
        <taxon>Alphaproteobacteria</taxon>
        <taxon>Rickettsiales</taxon>
        <taxon>Rickettsiaceae</taxon>
        <taxon>Rickettsieae</taxon>
        <taxon>Rickettsia</taxon>
        <taxon>spotted fever group</taxon>
    </lineage>
</organism>
<comment type="function">
    <text evidence="1">Specifically dimethylates two adjacent adenosines (A1518 and A1519) in the loop of a conserved hairpin near the 3'-end of 16S rRNA in the 30S particle. May play a critical role in biogenesis of 30S subunits.</text>
</comment>
<comment type="catalytic activity">
    <reaction evidence="1">
        <text>adenosine(1518)/adenosine(1519) in 16S rRNA + 4 S-adenosyl-L-methionine = N(6)-dimethyladenosine(1518)/N(6)-dimethyladenosine(1519) in 16S rRNA + 4 S-adenosyl-L-homocysteine + 4 H(+)</text>
        <dbReference type="Rhea" id="RHEA:19609"/>
        <dbReference type="Rhea" id="RHEA-COMP:10232"/>
        <dbReference type="Rhea" id="RHEA-COMP:10233"/>
        <dbReference type="ChEBI" id="CHEBI:15378"/>
        <dbReference type="ChEBI" id="CHEBI:57856"/>
        <dbReference type="ChEBI" id="CHEBI:59789"/>
        <dbReference type="ChEBI" id="CHEBI:74411"/>
        <dbReference type="ChEBI" id="CHEBI:74493"/>
        <dbReference type="EC" id="2.1.1.182"/>
    </reaction>
</comment>
<comment type="subcellular location">
    <subcellularLocation>
        <location evidence="1">Cytoplasm</location>
    </subcellularLocation>
</comment>
<comment type="similarity">
    <text evidence="1">Belongs to the class I-like SAM-binding methyltransferase superfamily. rRNA adenine N(6)-methyltransferase family. RsmA subfamily.</text>
</comment>
<comment type="sequence caution" evidence="2">
    <conflict type="erroneous initiation">
        <sequence resource="EMBL-CDS" id="AAY61107"/>
    </conflict>
</comment>
<protein>
    <recommendedName>
        <fullName evidence="1">Ribosomal RNA small subunit methyltransferase A</fullName>
        <ecNumber evidence="1">2.1.1.182</ecNumber>
    </recommendedName>
    <alternativeName>
        <fullName evidence="1">16S rRNA (adenine(1518)-N(6)/adenine(1519)-N(6))-dimethyltransferase</fullName>
    </alternativeName>
    <alternativeName>
        <fullName evidence="1">16S rRNA dimethyladenosine transferase</fullName>
    </alternativeName>
    <alternativeName>
        <fullName evidence="1">16S rRNA dimethylase</fullName>
    </alternativeName>
    <alternativeName>
        <fullName evidence="1">S-adenosylmethionine-6-N', N'-adenosyl(rRNA) dimethyltransferase</fullName>
    </alternativeName>
</protein>
<evidence type="ECO:0000255" key="1">
    <source>
        <dbReference type="HAMAP-Rule" id="MF_00607"/>
    </source>
</evidence>
<evidence type="ECO:0000305" key="2"/>
<feature type="chain" id="PRO_0000257339" description="Ribosomal RNA small subunit methyltransferase A">
    <location>
        <begin position="1"/>
        <end position="239"/>
    </location>
</feature>
<feature type="binding site" evidence="1">
    <location>
        <position position="23"/>
    </location>
    <ligand>
        <name>S-adenosyl-L-methionine</name>
        <dbReference type="ChEBI" id="CHEBI:59789"/>
    </ligand>
</feature>
<feature type="binding site" evidence="1">
    <location>
        <position position="25"/>
    </location>
    <ligand>
        <name>S-adenosyl-L-methionine</name>
        <dbReference type="ChEBI" id="CHEBI:59789"/>
    </ligand>
</feature>
<feature type="binding site" evidence="1">
    <location>
        <position position="50"/>
    </location>
    <ligand>
        <name>S-adenosyl-L-methionine</name>
        <dbReference type="ChEBI" id="CHEBI:59789"/>
    </ligand>
</feature>
<feature type="binding site" evidence="1">
    <location>
        <position position="72"/>
    </location>
    <ligand>
        <name>S-adenosyl-L-methionine</name>
        <dbReference type="ChEBI" id="CHEBI:59789"/>
    </ligand>
</feature>
<feature type="binding site" evidence="1">
    <location>
        <position position="97"/>
    </location>
    <ligand>
        <name>S-adenosyl-L-methionine</name>
        <dbReference type="ChEBI" id="CHEBI:59789"/>
    </ligand>
</feature>
<feature type="binding site" evidence="1">
    <location>
        <position position="116"/>
    </location>
    <ligand>
        <name>S-adenosyl-L-methionine</name>
        <dbReference type="ChEBI" id="CHEBI:59789"/>
    </ligand>
</feature>
<accession>Q4UMV1</accession>
<gene>
    <name evidence="1" type="primary">rsmA</name>
    <name evidence="1" type="synonym">ksgA</name>
    <name type="ordered locus">RF_0256</name>
</gene>